<proteinExistence type="evidence at protein level"/>
<reference key="1">
    <citation type="journal article" date="2004" name="DNA Res.">
        <title>Prediction of the coding sequences of mouse homologues of FLJ genes: the complete nucleotide sequences of 110 mouse FLJ-homologous cDNAs identified by screening of terminal sequences of cDNA clones randomly sampled from size-fractionated libraries.</title>
        <authorList>
            <person name="Okazaki N."/>
            <person name="Kikuno R."/>
            <person name="Ohara R."/>
            <person name="Inamoto S."/>
            <person name="Koseki H."/>
            <person name="Hiraoka S."/>
            <person name="Saga Y."/>
            <person name="Kitamura H."/>
            <person name="Nakagawa T."/>
            <person name="Nagase T."/>
            <person name="Ohara O."/>
            <person name="Koga H."/>
        </authorList>
    </citation>
    <scope>NUCLEOTIDE SEQUENCE [LARGE SCALE MRNA] (ISOFORM 1)</scope>
</reference>
<reference key="2">
    <citation type="journal article" date="2005" name="Science">
        <title>The transcriptional landscape of the mammalian genome.</title>
        <authorList>
            <person name="Carninci P."/>
            <person name="Kasukawa T."/>
            <person name="Katayama S."/>
            <person name="Gough J."/>
            <person name="Frith M.C."/>
            <person name="Maeda N."/>
            <person name="Oyama R."/>
            <person name="Ravasi T."/>
            <person name="Lenhard B."/>
            <person name="Wells C."/>
            <person name="Kodzius R."/>
            <person name="Shimokawa K."/>
            <person name="Bajic V.B."/>
            <person name="Brenner S.E."/>
            <person name="Batalov S."/>
            <person name="Forrest A.R."/>
            <person name="Zavolan M."/>
            <person name="Davis M.J."/>
            <person name="Wilming L.G."/>
            <person name="Aidinis V."/>
            <person name="Allen J.E."/>
            <person name="Ambesi-Impiombato A."/>
            <person name="Apweiler R."/>
            <person name="Aturaliya R.N."/>
            <person name="Bailey T.L."/>
            <person name="Bansal M."/>
            <person name="Baxter L."/>
            <person name="Beisel K.W."/>
            <person name="Bersano T."/>
            <person name="Bono H."/>
            <person name="Chalk A.M."/>
            <person name="Chiu K.P."/>
            <person name="Choudhary V."/>
            <person name="Christoffels A."/>
            <person name="Clutterbuck D.R."/>
            <person name="Crowe M.L."/>
            <person name="Dalla E."/>
            <person name="Dalrymple B.P."/>
            <person name="de Bono B."/>
            <person name="Della Gatta G."/>
            <person name="di Bernardo D."/>
            <person name="Down T."/>
            <person name="Engstrom P."/>
            <person name="Fagiolini M."/>
            <person name="Faulkner G."/>
            <person name="Fletcher C.F."/>
            <person name="Fukushima T."/>
            <person name="Furuno M."/>
            <person name="Futaki S."/>
            <person name="Gariboldi M."/>
            <person name="Georgii-Hemming P."/>
            <person name="Gingeras T.R."/>
            <person name="Gojobori T."/>
            <person name="Green R.E."/>
            <person name="Gustincich S."/>
            <person name="Harbers M."/>
            <person name="Hayashi Y."/>
            <person name="Hensch T.K."/>
            <person name="Hirokawa N."/>
            <person name="Hill D."/>
            <person name="Huminiecki L."/>
            <person name="Iacono M."/>
            <person name="Ikeo K."/>
            <person name="Iwama A."/>
            <person name="Ishikawa T."/>
            <person name="Jakt M."/>
            <person name="Kanapin A."/>
            <person name="Katoh M."/>
            <person name="Kawasawa Y."/>
            <person name="Kelso J."/>
            <person name="Kitamura H."/>
            <person name="Kitano H."/>
            <person name="Kollias G."/>
            <person name="Krishnan S.P."/>
            <person name="Kruger A."/>
            <person name="Kummerfeld S.K."/>
            <person name="Kurochkin I.V."/>
            <person name="Lareau L.F."/>
            <person name="Lazarevic D."/>
            <person name="Lipovich L."/>
            <person name="Liu J."/>
            <person name="Liuni S."/>
            <person name="McWilliam S."/>
            <person name="Madan Babu M."/>
            <person name="Madera M."/>
            <person name="Marchionni L."/>
            <person name="Matsuda H."/>
            <person name="Matsuzawa S."/>
            <person name="Miki H."/>
            <person name="Mignone F."/>
            <person name="Miyake S."/>
            <person name="Morris K."/>
            <person name="Mottagui-Tabar S."/>
            <person name="Mulder N."/>
            <person name="Nakano N."/>
            <person name="Nakauchi H."/>
            <person name="Ng P."/>
            <person name="Nilsson R."/>
            <person name="Nishiguchi S."/>
            <person name="Nishikawa S."/>
            <person name="Nori F."/>
            <person name="Ohara O."/>
            <person name="Okazaki Y."/>
            <person name="Orlando V."/>
            <person name="Pang K.C."/>
            <person name="Pavan W.J."/>
            <person name="Pavesi G."/>
            <person name="Pesole G."/>
            <person name="Petrovsky N."/>
            <person name="Piazza S."/>
            <person name="Reed J."/>
            <person name="Reid J.F."/>
            <person name="Ring B.Z."/>
            <person name="Ringwald M."/>
            <person name="Rost B."/>
            <person name="Ruan Y."/>
            <person name="Salzberg S.L."/>
            <person name="Sandelin A."/>
            <person name="Schneider C."/>
            <person name="Schoenbach C."/>
            <person name="Sekiguchi K."/>
            <person name="Semple C.A."/>
            <person name="Seno S."/>
            <person name="Sessa L."/>
            <person name="Sheng Y."/>
            <person name="Shibata Y."/>
            <person name="Shimada H."/>
            <person name="Shimada K."/>
            <person name="Silva D."/>
            <person name="Sinclair B."/>
            <person name="Sperling S."/>
            <person name="Stupka E."/>
            <person name="Sugiura K."/>
            <person name="Sultana R."/>
            <person name="Takenaka Y."/>
            <person name="Taki K."/>
            <person name="Tammoja K."/>
            <person name="Tan S.L."/>
            <person name="Tang S."/>
            <person name="Taylor M.S."/>
            <person name="Tegner J."/>
            <person name="Teichmann S.A."/>
            <person name="Ueda H.R."/>
            <person name="van Nimwegen E."/>
            <person name="Verardo R."/>
            <person name="Wei C.L."/>
            <person name="Yagi K."/>
            <person name="Yamanishi H."/>
            <person name="Zabarovsky E."/>
            <person name="Zhu S."/>
            <person name="Zimmer A."/>
            <person name="Hide W."/>
            <person name="Bult C."/>
            <person name="Grimmond S.M."/>
            <person name="Teasdale R.D."/>
            <person name="Liu E.T."/>
            <person name="Brusic V."/>
            <person name="Quackenbush J."/>
            <person name="Wahlestedt C."/>
            <person name="Mattick J.S."/>
            <person name="Hume D.A."/>
            <person name="Kai C."/>
            <person name="Sasaki D."/>
            <person name="Tomaru Y."/>
            <person name="Fukuda S."/>
            <person name="Kanamori-Katayama M."/>
            <person name="Suzuki M."/>
            <person name="Aoki J."/>
            <person name="Arakawa T."/>
            <person name="Iida J."/>
            <person name="Imamura K."/>
            <person name="Itoh M."/>
            <person name="Kato T."/>
            <person name="Kawaji H."/>
            <person name="Kawagashira N."/>
            <person name="Kawashima T."/>
            <person name="Kojima M."/>
            <person name="Kondo S."/>
            <person name="Konno H."/>
            <person name="Nakano K."/>
            <person name="Ninomiya N."/>
            <person name="Nishio T."/>
            <person name="Okada M."/>
            <person name="Plessy C."/>
            <person name="Shibata K."/>
            <person name="Shiraki T."/>
            <person name="Suzuki S."/>
            <person name="Tagami M."/>
            <person name="Waki K."/>
            <person name="Watahiki A."/>
            <person name="Okamura-Oho Y."/>
            <person name="Suzuki H."/>
            <person name="Kawai J."/>
            <person name="Hayashizaki Y."/>
        </authorList>
    </citation>
    <scope>NUCLEOTIDE SEQUENCE [LARGE SCALE MRNA] (ISOFORMS 1 AND 2)</scope>
    <source>
        <strain>C57BL/6J</strain>
        <strain>NOD</strain>
        <tissue>Cerebellum</tissue>
        <tissue>Embryo</tissue>
    </source>
</reference>
<reference key="3">
    <citation type="journal article" date="2009" name="PLoS Biol.">
        <title>Lineage-specific biology revealed by a finished genome assembly of the mouse.</title>
        <authorList>
            <person name="Church D.M."/>
            <person name="Goodstadt L."/>
            <person name="Hillier L.W."/>
            <person name="Zody M.C."/>
            <person name="Goldstein S."/>
            <person name="She X."/>
            <person name="Bult C.J."/>
            <person name="Agarwala R."/>
            <person name="Cherry J.L."/>
            <person name="DiCuccio M."/>
            <person name="Hlavina W."/>
            <person name="Kapustin Y."/>
            <person name="Meric P."/>
            <person name="Maglott D."/>
            <person name="Birtle Z."/>
            <person name="Marques A.C."/>
            <person name="Graves T."/>
            <person name="Zhou S."/>
            <person name="Teague B."/>
            <person name="Potamousis K."/>
            <person name="Churas C."/>
            <person name="Place M."/>
            <person name="Herschleb J."/>
            <person name="Runnheim R."/>
            <person name="Forrest D."/>
            <person name="Amos-Landgraf J."/>
            <person name="Schwartz D.C."/>
            <person name="Cheng Z."/>
            <person name="Lindblad-Toh K."/>
            <person name="Eichler E.E."/>
            <person name="Ponting C.P."/>
        </authorList>
    </citation>
    <scope>NUCLEOTIDE SEQUENCE [LARGE SCALE GENOMIC DNA]</scope>
    <source>
        <strain>C57BL/6J</strain>
    </source>
</reference>
<reference key="4">
    <citation type="journal article" date="2004" name="Genome Res.">
        <title>The status, quality, and expansion of the NIH full-length cDNA project: the Mammalian Gene Collection (MGC).</title>
        <authorList>
            <consortium name="The MGC Project Team"/>
        </authorList>
    </citation>
    <scope>NUCLEOTIDE SEQUENCE [LARGE SCALE MRNA] (ISOFORMS 1; 2 AND 3)</scope>
    <source>
        <strain>C57BL/6NCr</strain>
        <strain>Czech II</strain>
        <tissue>Hematopoietic stem cell</tissue>
        <tissue>Jaw</tissue>
        <tissue>Limb</tissue>
        <tissue>Mammary tumor</tissue>
    </source>
</reference>
<reference key="5">
    <citation type="journal article" date="2010" name="Cell">
        <title>A tissue-specific atlas of mouse protein phosphorylation and expression.</title>
        <authorList>
            <person name="Huttlin E.L."/>
            <person name="Jedrychowski M.P."/>
            <person name="Elias J.E."/>
            <person name="Goswami T."/>
            <person name="Rad R."/>
            <person name="Beausoleil S.A."/>
            <person name="Villen J."/>
            <person name="Haas W."/>
            <person name="Sowa M.E."/>
            <person name="Gygi S.P."/>
        </authorList>
    </citation>
    <scope>IDENTIFICATION BY MASS SPECTROMETRY [LARGE SCALE ANALYSIS]</scope>
    <source>
        <tissue>Liver</tissue>
        <tissue>Lung</tissue>
        <tissue>Spleen</tissue>
    </source>
</reference>
<keyword id="KW-0025">Alternative splicing</keyword>
<keyword id="KW-0143">Chaperone</keyword>
<keyword id="KW-1185">Reference proteome</keyword>
<keyword id="KW-0346">Stress response</keyword>
<organism>
    <name type="scientific">Mus musculus</name>
    <name type="common">Mouse</name>
    <dbReference type="NCBI Taxonomy" id="10090"/>
    <lineage>
        <taxon>Eukaryota</taxon>
        <taxon>Metazoa</taxon>
        <taxon>Chordata</taxon>
        <taxon>Craniata</taxon>
        <taxon>Vertebrata</taxon>
        <taxon>Euteleostomi</taxon>
        <taxon>Mammalia</taxon>
        <taxon>Eutheria</taxon>
        <taxon>Euarchontoglires</taxon>
        <taxon>Glires</taxon>
        <taxon>Rodentia</taxon>
        <taxon>Myomorpha</taxon>
        <taxon>Muroidea</taxon>
        <taxon>Muridae</taxon>
        <taxon>Murinae</taxon>
        <taxon>Mus</taxon>
        <taxon>Mus</taxon>
    </lineage>
</organism>
<feature type="chain" id="PRO_0000315606" description="Activator of 90 kDa heat shock protein ATPase homolog 2">
    <location>
        <begin position="1"/>
        <end position="331"/>
    </location>
</feature>
<feature type="splice variant" id="VSP_030572" description="In isoform 2." evidence="2 3">
    <location>
        <begin position="1"/>
        <end position="48"/>
    </location>
</feature>
<feature type="splice variant" id="VSP_030573" description="In isoform 3." evidence="2">
    <original>EHYATVELNFVPAPGQTELQLDCKGVPVCKEENMKFCWQKQHFEEIKGLLELTAQNA</original>
    <variation>ALGFFPRTLCNS</variation>
    <location>
        <begin position="275"/>
        <end position="331"/>
    </location>
</feature>
<feature type="sequence conflict" description="In Ref. 4; AAH52829." evidence="4" ref="4">
    <original>E</original>
    <variation>A</variation>
    <location>
        <position position="14"/>
    </location>
</feature>
<feature type="sequence conflict" description="In Ref. 4; AAH52829." evidence="4" ref="4">
    <original>E</original>
    <variation>A</variation>
    <location>
        <position position="29"/>
    </location>
</feature>
<feature type="sequence conflict" description="In Ref. 1; BAC04256." evidence="4" ref="1">
    <original>E</original>
    <variation>G</variation>
    <location>
        <position position="42"/>
    </location>
</feature>
<feature type="sequence conflict" description="In Ref. 4; AAH38397." evidence="4" ref="4">
    <original>T</original>
    <variation>A</variation>
    <location>
        <position position="327"/>
    </location>
</feature>
<protein>
    <recommendedName>
        <fullName>Activator of 90 kDa heat shock protein ATPase homolog 2</fullName>
    </recommendedName>
</protein>
<evidence type="ECO:0000250" key="1">
    <source>
        <dbReference type="UniProtKB" id="Q12449"/>
    </source>
</evidence>
<evidence type="ECO:0000303" key="2">
    <source>
    </source>
</evidence>
<evidence type="ECO:0000303" key="3">
    <source>
    </source>
</evidence>
<evidence type="ECO:0000305" key="4"/>
<sequence>MAKWGQGDPRWIVEEREDGTNVNNWHWTERDATIWSKGKLRELLVGIAMENEAGRCEISELKQVEGEASCNSRKGKLIFFYEWNIKLAWKGTVKESGAKHKGLIEIPSLSEENEINDTEVNVSKKKGDGEILKDLMRTTGTAKVREALGEYLKALKTEFTTGMILPTKAVATQELTLQRKLNENKLQASPVALGVRIPTVALHLTELFDTTVEQLYSIFTVKELVQKFSKSPAVLEAERGGKFQMFDGNISGEYVELVTNRKIIMKWRCRNWPEEHYATVELNFVPAPGQTELQLDCKGVPVCKEENMKFCWQKQHFEEIKGLLELTAQNA</sequence>
<dbReference type="EMBL" id="AK093945">
    <property type="protein sequence ID" value="BAC04256.1"/>
    <property type="molecule type" value="mRNA"/>
</dbReference>
<dbReference type="EMBL" id="AK035941">
    <property type="protein sequence ID" value="BAC29251.1"/>
    <property type="molecule type" value="mRNA"/>
</dbReference>
<dbReference type="EMBL" id="AK137116">
    <property type="protein sequence ID" value="BAE23240.1"/>
    <property type="molecule type" value="mRNA"/>
</dbReference>
<dbReference type="EMBL" id="AK154196">
    <property type="protein sequence ID" value="BAE32431.1"/>
    <property type="molecule type" value="mRNA"/>
</dbReference>
<dbReference type="EMBL" id="AK155265">
    <property type="protein sequence ID" value="BAE33153.1"/>
    <property type="molecule type" value="mRNA"/>
</dbReference>
<dbReference type="EMBL" id="AL672049">
    <property type="status" value="NOT_ANNOTATED_CDS"/>
    <property type="molecule type" value="Genomic_DNA"/>
</dbReference>
<dbReference type="EMBL" id="BC038397">
    <property type="protein sequence ID" value="AAH38397.2"/>
    <property type="status" value="ALT_INIT"/>
    <property type="molecule type" value="mRNA"/>
</dbReference>
<dbReference type="EMBL" id="BC052829">
    <property type="protein sequence ID" value="AAH52829.1"/>
    <property type="molecule type" value="mRNA"/>
</dbReference>
<dbReference type="EMBL" id="BC064012">
    <property type="protein sequence ID" value="AAH64012.1"/>
    <property type="molecule type" value="mRNA"/>
</dbReference>
<dbReference type="CCDS" id="CCDS24476.1">
    <molecule id="Q8N9S3-1"/>
</dbReference>
<dbReference type="CCDS" id="CCDS70149.1">
    <molecule id="Q8N9S3-2"/>
</dbReference>
<dbReference type="RefSeq" id="NP_001277583.1">
    <molecule id="Q8N9S3-2"/>
    <property type="nucleotide sequence ID" value="NM_001290654.2"/>
</dbReference>
<dbReference type="RefSeq" id="NP_001277584.1">
    <molecule id="Q8N9S3-3"/>
    <property type="nucleotide sequence ID" value="NM_001290655.2"/>
</dbReference>
<dbReference type="RefSeq" id="NP_765979.3">
    <molecule id="Q8N9S3-1"/>
    <property type="nucleotide sequence ID" value="NM_172391.4"/>
</dbReference>
<dbReference type="SMR" id="Q8N9S3"/>
<dbReference type="BioGRID" id="234490">
    <property type="interactions" value="2"/>
</dbReference>
<dbReference type="FunCoup" id="Q8N9S3">
    <property type="interactions" value="2044"/>
</dbReference>
<dbReference type="STRING" id="10090.ENSMUSP00000020529"/>
<dbReference type="GlyGen" id="Q8N9S3">
    <property type="glycosylation" value="1 site, 1 O-linked glycan (1 site)"/>
</dbReference>
<dbReference type="iPTMnet" id="Q8N9S3"/>
<dbReference type="PhosphoSitePlus" id="Q8N9S3"/>
<dbReference type="PaxDb" id="10090-ENSMUSP00000020529"/>
<dbReference type="ProteomicsDB" id="296087">
    <molecule id="Q8N9S3-1"/>
</dbReference>
<dbReference type="ProteomicsDB" id="296088">
    <molecule id="Q8N9S3-2"/>
</dbReference>
<dbReference type="ProteomicsDB" id="296089">
    <molecule id="Q8N9S3-3"/>
</dbReference>
<dbReference type="Pumba" id="Q8N9S3"/>
<dbReference type="DNASU" id="268390"/>
<dbReference type="Ensembl" id="ENSMUST00000020529.13">
    <molecule id="Q8N9S3-1"/>
    <property type="protein sequence ID" value="ENSMUSP00000020529.7"/>
    <property type="gene ID" value="ENSMUSG00000020288.14"/>
</dbReference>
<dbReference type="Ensembl" id="ENSMUST00000109539.8">
    <molecule id="Q8N9S3-2"/>
    <property type="protein sequence ID" value="ENSMUSP00000105166.2"/>
    <property type="gene ID" value="ENSMUSG00000020288.14"/>
</dbReference>
<dbReference type="GeneID" id="268390"/>
<dbReference type="KEGG" id="mmu:268390"/>
<dbReference type="UCSC" id="uc007ifb.2">
    <molecule id="Q8N9S3-1"/>
    <property type="organism name" value="mouse"/>
</dbReference>
<dbReference type="UCSC" id="uc056ykb.1">
    <molecule id="Q8N9S3-3"/>
    <property type="organism name" value="mouse"/>
</dbReference>
<dbReference type="AGR" id="MGI:1916133"/>
<dbReference type="CTD" id="268390"/>
<dbReference type="MGI" id="MGI:1916133">
    <property type="gene designation" value="Ahsa2"/>
</dbReference>
<dbReference type="VEuPathDB" id="HostDB:ENSMUSG00000020288"/>
<dbReference type="eggNOG" id="KOG2936">
    <property type="taxonomic scope" value="Eukaryota"/>
</dbReference>
<dbReference type="GeneTree" id="ENSGT00940000157344"/>
<dbReference type="HOGENOM" id="CLU_049046_0_0_1"/>
<dbReference type="InParanoid" id="Q8N9S3"/>
<dbReference type="OMA" id="GDCEVNQ"/>
<dbReference type="OrthoDB" id="567237at2759"/>
<dbReference type="PhylomeDB" id="Q8N9S3"/>
<dbReference type="TreeFam" id="TF313680"/>
<dbReference type="BioGRID-ORCS" id="268390">
    <property type="hits" value="0 hits in 79 CRISPR screens"/>
</dbReference>
<dbReference type="ChiTaRS" id="Ahsa2">
    <property type="organism name" value="mouse"/>
</dbReference>
<dbReference type="PRO" id="PR:Q8N9S3"/>
<dbReference type="Proteomes" id="UP000000589">
    <property type="component" value="Chromosome 11"/>
</dbReference>
<dbReference type="RNAct" id="Q8N9S3">
    <property type="molecule type" value="protein"/>
</dbReference>
<dbReference type="Bgee" id="ENSMUSG00000020288">
    <property type="expression patterns" value="Expressed in cortical plate and 260 other cell types or tissues"/>
</dbReference>
<dbReference type="ExpressionAtlas" id="Q8N9S3">
    <property type="expression patterns" value="baseline and differential"/>
</dbReference>
<dbReference type="GO" id="GO:0001671">
    <property type="term" value="F:ATPase activator activity"/>
    <property type="evidence" value="ECO:0007669"/>
    <property type="project" value="InterPro"/>
</dbReference>
<dbReference type="GO" id="GO:0051087">
    <property type="term" value="F:protein-folding chaperone binding"/>
    <property type="evidence" value="ECO:0007669"/>
    <property type="project" value="InterPro"/>
</dbReference>
<dbReference type="CDD" id="cd08892">
    <property type="entry name" value="SRPBCC_Aha1"/>
    <property type="match status" value="1"/>
</dbReference>
<dbReference type="Gene3D" id="3.30.530.20">
    <property type="match status" value="1"/>
</dbReference>
<dbReference type="Gene3D" id="3.15.10.20">
    <property type="entry name" value="Activator of Hsp90 ATPase Aha1, N-terminal domain"/>
    <property type="match status" value="1"/>
</dbReference>
<dbReference type="InterPro" id="IPR036338">
    <property type="entry name" value="Aha1"/>
</dbReference>
<dbReference type="InterPro" id="IPR015310">
    <property type="entry name" value="AHSA1-like_N"/>
</dbReference>
<dbReference type="InterPro" id="IPR013538">
    <property type="entry name" value="ASHA1/2-like_C"/>
</dbReference>
<dbReference type="InterPro" id="IPR023393">
    <property type="entry name" value="START-like_dom_sf"/>
</dbReference>
<dbReference type="PANTHER" id="PTHR13009:SF4">
    <property type="entry name" value="ACTIVATOR OF 90 KDA HEAT SHOCK PROTEIN ATPASE HOMOLOG 2-RELATED"/>
    <property type="match status" value="1"/>
</dbReference>
<dbReference type="PANTHER" id="PTHR13009">
    <property type="entry name" value="HEAT SHOCK PROTEIN 90 HSP90 CO-CHAPERONE AHA-1"/>
    <property type="match status" value="1"/>
</dbReference>
<dbReference type="Pfam" id="PF09229">
    <property type="entry name" value="Aha1_N"/>
    <property type="match status" value="1"/>
</dbReference>
<dbReference type="Pfam" id="PF08327">
    <property type="entry name" value="AHSA1"/>
    <property type="match status" value="1"/>
</dbReference>
<dbReference type="SMART" id="SM01000">
    <property type="entry name" value="Aha1_N"/>
    <property type="match status" value="1"/>
</dbReference>
<dbReference type="SUPFAM" id="SSF103111">
    <property type="entry name" value="Activator of Hsp90 ATPase, Aha1"/>
    <property type="match status" value="1"/>
</dbReference>
<dbReference type="SUPFAM" id="SSF55961">
    <property type="entry name" value="Bet v1-like"/>
    <property type="match status" value="1"/>
</dbReference>
<comment type="function">
    <text evidence="1">Co-chaperone that stimulates HSP90 ATPase activity.</text>
</comment>
<comment type="alternative products">
    <event type="alternative splicing"/>
    <isoform>
        <id>Q8N9S3-1</id>
        <name>1</name>
        <sequence type="displayed"/>
    </isoform>
    <isoform>
        <id>Q8N9S3-2</id>
        <name>2</name>
        <sequence type="described" ref="VSP_030572"/>
    </isoform>
    <isoform>
        <id>Q8N9S3-3</id>
        <name>3</name>
        <sequence type="described" ref="VSP_030573"/>
    </isoform>
</comment>
<comment type="similarity">
    <text evidence="4">Belongs to the AHA1 family.</text>
</comment>
<comment type="sequence caution" evidence="4">
    <conflict type="erroneous initiation">
        <sequence resource="EMBL-CDS" id="AAH38397"/>
    </conflict>
    <text>Truncated N-terminus.</text>
</comment>
<name>AHSA2_MOUSE</name>
<accession>Q8N9S3</accession>
<accession>Q0P626</accession>
<accession>Q6P3F2</accession>
<accession>Q7TMW7</accession>
<accession>Q8CBI4</accession>
<gene>
    <name type="primary">Ahsa2</name>
</gene>